<feature type="chain" id="PRO_0000201121" description="HTH-type transcriptional regulator MntR">
    <location>
        <begin position="1"/>
        <end position="142"/>
    </location>
</feature>
<feature type="domain" description="HTH dtxR-type" evidence="1">
    <location>
        <begin position="1"/>
        <end position="63"/>
    </location>
</feature>
<feature type="binding site" evidence="1">
    <location>
        <position position="8"/>
    </location>
    <ligand>
        <name>Mn(2+)</name>
        <dbReference type="ChEBI" id="CHEBI:29035"/>
        <label>1</label>
    </ligand>
</feature>
<feature type="binding site" evidence="1">
    <location>
        <position position="11"/>
    </location>
    <ligand>
        <name>Mn(2+)</name>
        <dbReference type="ChEBI" id="CHEBI:29035"/>
        <label>2</label>
    </ligand>
</feature>
<feature type="binding site" evidence="1">
    <location>
        <position position="77"/>
    </location>
    <ligand>
        <name>Mn(2+)</name>
        <dbReference type="ChEBI" id="CHEBI:29035"/>
        <label>2</label>
    </ligand>
</feature>
<feature type="binding site" evidence="1">
    <location>
        <position position="99"/>
    </location>
    <ligand>
        <name>Mn(2+)</name>
        <dbReference type="ChEBI" id="CHEBI:29035"/>
        <label>1</label>
    </ligand>
</feature>
<feature type="binding site" evidence="1">
    <location>
        <position position="99"/>
    </location>
    <ligand>
        <name>Mn(2+)</name>
        <dbReference type="ChEBI" id="CHEBI:29035"/>
        <label>2</label>
    </ligand>
</feature>
<feature type="binding site" evidence="1">
    <location>
        <position position="102"/>
    </location>
    <ligand>
        <name>Mn(2+)</name>
        <dbReference type="ChEBI" id="CHEBI:29035"/>
        <label>1</label>
    </ligand>
</feature>
<feature type="binding site" evidence="1">
    <location>
        <position position="102"/>
    </location>
    <ligand>
        <name>Mn(2+)</name>
        <dbReference type="ChEBI" id="CHEBI:29035"/>
        <label>2</label>
    </ligand>
</feature>
<feature type="binding site" evidence="1">
    <location>
        <position position="103"/>
    </location>
    <ligand>
        <name>Mn(2+)</name>
        <dbReference type="ChEBI" id="CHEBI:29035"/>
        <label>1</label>
    </ligand>
</feature>
<dbReference type="EMBL" id="AL591981">
    <property type="protein sequence ID" value="CAC99956.1"/>
    <property type="molecule type" value="Genomic_DNA"/>
</dbReference>
<dbReference type="PIR" id="AF1309">
    <property type="entry name" value="AF1309"/>
</dbReference>
<dbReference type="RefSeq" id="NP_465402.1">
    <property type="nucleotide sequence ID" value="NC_003210.1"/>
</dbReference>
<dbReference type="RefSeq" id="WP_003725831.1">
    <property type="nucleotide sequence ID" value="NZ_CP149495.1"/>
</dbReference>
<dbReference type="SMR" id="Q8Y623"/>
<dbReference type="STRING" id="169963.gene:17594563"/>
<dbReference type="PaxDb" id="169963-lmo1878"/>
<dbReference type="EnsemblBacteria" id="CAC99956">
    <property type="protein sequence ID" value="CAC99956"/>
    <property type="gene ID" value="CAC99956"/>
</dbReference>
<dbReference type="GeneID" id="985816"/>
<dbReference type="KEGG" id="lmo:lmo1878"/>
<dbReference type="PATRIC" id="fig|169963.11.peg.1923"/>
<dbReference type="eggNOG" id="COG1321">
    <property type="taxonomic scope" value="Bacteria"/>
</dbReference>
<dbReference type="HOGENOM" id="CLU_069532_3_0_9"/>
<dbReference type="OrthoDB" id="9791355at2"/>
<dbReference type="PhylomeDB" id="Q8Y623"/>
<dbReference type="BioCyc" id="LMON169963:LMO1878-MONOMER"/>
<dbReference type="Proteomes" id="UP000000817">
    <property type="component" value="Chromosome"/>
</dbReference>
<dbReference type="GO" id="GO:0005737">
    <property type="term" value="C:cytoplasm"/>
    <property type="evidence" value="ECO:0007669"/>
    <property type="project" value="UniProtKB-SubCell"/>
</dbReference>
<dbReference type="GO" id="GO:0003677">
    <property type="term" value="F:DNA binding"/>
    <property type="evidence" value="ECO:0007669"/>
    <property type="project" value="UniProtKB-KW"/>
</dbReference>
<dbReference type="GO" id="GO:0003700">
    <property type="term" value="F:DNA-binding transcription factor activity"/>
    <property type="evidence" value="ECO:0007669"/>
    <property type="project" value="UniProtKB-UniRule"/>
</dbReference>
<dbReference type="GO" id="GO:0030145">
    <property type="term" value="F:manganese ion binding"/>
    <property type="evidence" value="ECO:0007669"/>
    <property type="project" value="UniProtKB-UniRule"/>
</dbReference>
<dbReference type="GO" id="GO:0046983">
    <property type="term" value="F:protein dimerization activity"/>
    <property type="evidence" value="ECO:0007669"/>
    <property type="project" value="InterPro"/>
</dbReference>
<dbReference type="GO" id="GO:0030026">
    <property type="term" value="P:intracellular manganese ion homeostasis"/>
    <property type="evidence" value="ECO:0007669"/>
    <property type="project" value="UniProtKB-UniRule"/>
</dbReference>
<dbReference type="FunFam" id="1.10.10.10:FF:000189">
    <property type="entry name" value="HTH-type transcriptional regulator MntR"/>
    <property type="match status" value="1"/>
</dbReference>
<dbReference type="Gene3D" id="1.10.60.10">
    <property type="entry name" value="Iron dependent repressor, metal binding and dimerisation domain"/>
    <property type="match status" value="1"/>
</dbReference>
<dbReference type="Gene3D" id="1.10.10.10">
    <property type="entry name" value="Winged helix-like DNA-binding domain superfamily/Winged helix DNA-binding domain"/>
    <property type="match status" value="1"/>
</dbReference>
<dbReference type="HAMAP" id="MF_00732">
    <property type="entry name" value="HTH_MntR"/>
    <property type="match status" value="1"/>
</dbReference>
<dbReference type="InterPro" id="IPR050536">
    <property type="entry name" value="DtxR_MntR_Metal-Reg"/>
</dbReference>
<dbReference type="InterPro" id="IPR001367">
    <property type="entry name" value="Fe_dep_repressor"/>
</dbReference>
<dbReference type="InterPro" id="IPR036421">
    <property type="entry name" value="Fe_dep_repressor_sf"/>
</dbReference>
<dbReference type="InterPro" id="IPR022687">
    <property type="entry name" value="HTH_DTXR"/>
</dbReference>
<dbReference type="InterPro" id="IPR022897">
    <property type="entry name" value="HTH_tscrpt_reg_MntR"/>
</dbReference>
<dbReference type="InterPro" id="IPR022689">
    <property type="entry name" value="Iron_dep_repressor"/>
</dbReference>
<dbReference type="InterPro" id="IPR036388">
    <property type="entry name" value="WH-like_DNA-bd_sf"/>
</dbReference>
<dbReference type="InterPro" id="IPR036390">
    <property type="entry name" value="WH_DNA-bd_sf"/>
</dbReference>
<dbReference type="NCBIfam" id="NF003025">
    <property type="entry name" value="PRK03902.1"/>
    <property type="match status" value="1"/>
</dbReference>
<dbReference type="PANTHER" id="PTHR33238">
    <property type="entry name" value="IRON (METAL) DEPENDENT REPRESSOR, DTXR FAMILY"/>
    <property type="match status" value="1"/>
</dbReference>
<dbReference type="PANTHER" id="PTHR33238:SF11">
    <property type="entry name" value="TRANSCRIPTIONAL REGULATOR MNTR"/>
    <property type="match status" value="1"/>
</dbReference>
<dbReference type="Pfam" id="PF02742">
    <property type="entry name" value="Fe_dep_repr_C"/>
    <property type="match status" value="1"/>
</dbReference>
<dbReference type="Pfam" id="PF01325">
    <property type="entry name" value="Fe_dep_repress"/>
    <property type="match status" value="1"/>
</dbReference>
<dbReference type="SMART" id="SM00529">
    <property type="entry name" value="HTH_DTXR"/>
    <property type="match status" value="1"/>
</dbReference>
<dbReference type="SUPFAM" id="SSF47979">
    <property type="entry name" value="Iron-dependent repressor protein, dimerization domain"/>
    <property type="match status" value="1"/>
</dbReference>
<dbReference type="SUPFAM" id="SSF46785">
    <property type="entry name" value="Winged helix' DNA-binding domain"/>
    <property type="match status" value="1"/>
</dbReference>
<dbReference type="PROSITE" id="PS50944">
    <property type="entry name" value="HTH_DTXR"/>
    <property type="match status" value="1"/>
</dbReference>
<protein>
    <recommendedName>
        <fullName evidence="1">HTH-type transcriptional regulator MntR</fullName>
    </recommendedName>
    <alternativeName>
        <fullName evidence="1">Manganese transport regulator</fullName>
    </alternativeName>
</protein>
<keyword id="KW-0010">Activator</keyword>
<keyword id="KW-0963">Cytoplasm</keyword>
<keyword id="KW-0238">DNA-binding</keyword>
<keyword id="KW-0464">Manganese</keyword>
<keyword id="KW-0479">Metal-binding</keyword>
<keyword id="KW-1185">Reference proteome</keyword>
<keyword id="KW-0678">Repressor</keyword>
<keyword id="KW-0804">Transcription</keyword>
<keyword id="KW-0805">Transcription regulation</keyword>
<reference key="1">
    <citation type="journal article" date="2001" name="Science">
        <title>Comparative genomics of Listeria species.</title>
        <authorList>
            <person name="Glaser P."/>
            <person name="Frangeul L."/>
            <person name="Buchrieser C."/>
            <person name="Rusniok C."/>
            <person name="Amend A."/>
            <person name="Baquero F."/>
            <person name="Berche P."/>
            <person name="Bloecker H."/>
            <person name="Brandt P."/>
            <person name="Chakraborty T."/>
            <person name="Charbit A."/>
            <person name="Chetouani F."/>
            <person name="Couve E."/>
            <person name="de Daruvar A."/>
            <person name="Dehoux P."/>
            <person name="Domann E."/>
            <person name="Dominguez-Bernal G."/>
            <person name="Duchaud E."/>
            <person name="Durant L."/>
            <person name="Dussurget O."/>
            <person name="Entian K.-D."/>
            <person name="Fsihi H."/>
            <person name="Garcia-del Portillo F."/>
            <person name="Garrido P."/>
            <person name="Gautier L."/>
            <person name="Goebel W."/>
            <person name="Gomez-Lopez N."/>
            <person name="Hain T."/>
            <person name="Hauf J."/>
            <person name="Jackson D."/>
            <person name="Jones L.-M."/>
            <person name="Kaerst U."/>
            <person name="Kreft J."/>
            <person name="Kuhn M."/>
            <person name="Kunst F."/>
            <person name="Kurapkat G."/>
            <person name="Madueno E."/>
            <person name="Maitournam A."/>
            <person name="Mata Vicente J."/>
            <person name="Ng E."/>
            <person name="Nedjari H."/>
            <person name="Nordsiek G."/>
            <person name="Novella S."/>
            <person name="de Pablos B."/>
            <person name="Perez-Diaz J.-C."/>
            <person name="Purcell R."/>
            <person name="Remmel B."/>
            <person name="Rose M."/>
            <person name="Schlueter T."/>
            <person name="Simoes N."/>
            <person name="Tierrez A."/>
            <person name="Vazquez-Boland J.-A."/>
            <person name="Voss H."/>
            <person name="Wehland J."/>
            <person name="Cossart P."/>
        </authorList>
    </citation>
    <scope>NUCLEOTIDE SEQUENCE [LARGE SCALE GENOMIC DNA]</scope>
    <source>
        <strain>ATCC BAA-679 / EGD-e</strain>
    </source>
</reference>
<gene>
    <name evidence="1" type="primary">mntR</name>
    <name type="ordered locus">lmo1878</name>
</gene>
<accession>Q8Y623</accession>
<name>MNTR_LISMO</name>
<comment type="function">
    <text evidence="1">Central regulator of manganese homeostasis.</text>
</comment>
<comment type="activity regulation">
    <text evidence="1">DNA binding is strongly activated by Mn(2+).</text>
</comment>
<comment type="subunit">
    <text evidence="1">Homodimer.</text>
</comment>
<comment type="subcellular location">
    <subcellularLocation>
        <location evidence="1">Cytoplasm</location>
    </subcellularLocation>
</comment>
<comment type="similarity">
    <text evidence="1">Belongs to the DtxR/MntR family.</text>
</comment>
<organism>
    <name type="scientific">Listeria monocytogenes serovar 1/2a (strain ATCC BAA-679 / EGD-e)</name>
    <dbReference type="NCBI Taxonomy" id="169963"/>
    <lineage>
        <taxon>Bacteria</taxon>
        <taxon>Bacillati</taxon>
        <taxon>Bacillota</taxon>
        <taxon>Bacilli</taxon>
        <taxon>Bacillales</taxon>
        <taxon>Listeriaceae</taxon>
        <taxon>Listeria</taxon>
    </lineage>
</organism>
<evidence type="ECO:0000255" key="1">
    <source>
        <dbReference type="HAMAP-Rule" id="MF_00732"/>
    </source>
</evidence>
<sequence>MPTPSMEDYIEKIYSLIETKGYARVSDIADELFVHPSSVTKMVQKLDKDEYLIYEKYRGLILTPKGTQMGKRLLERHALLESFLSIIGVDPSHIYHDVEGIEHHLSWNSIDRIGDVVQFFENHPDALKTLKAMETTKPETKE</sequence>
<proteinExistence type="inferred from homology"/>